<organism>
    <name type="scientific">Drosophila melanogaster</name>
    <name type="common">Fruit fly</name>
    <dbReference type="NCBI Taxonomy" id="7227"/>
    <lineage>
        <taxon>Eukaryota</taxon>
        <taxon>Metazoa</taxon>
        <taxon>Ecdysozoa</taxon>
        <taxon>Arthropoda</taxon>
        <taxon>Hexapoda</taxon>
        <taxon>Insecta</taxon>
        <taxon>Pterygota</taxon>
        <taxon>Neoptera</taxon>
        <taxon>Endopterygota</taxon>
        <taxon>Diptera</taxon>
        <taxon>Brachycera</taxon>
        <taxon>Muscomorpha</taxon>
        <taxon>Ephydroidea</taxon>
        <taxon>Drosophilidae</taxon>
        <taxon>Drosophila</taxon>
        <taxon>Sophophora</taxon>
    </lineage>
</organism>
<name>FOXF_DROME</name>
<dbReference type="EMBL" id="AF292388">
    <property type="protein sequence ID" value="AAK97051.1"/>
    <property type="molecule type" value="mRNA"/>
</dbReference>
<dbReference type="EMBL" id="AE014296">
    <property type="protein sequence ID" value="AAF50625.2"/>
    <property type="molecule type" value="Genomic_DNA"/>
</dbReference>
<dbReference type="EMBL" id="BT025075">
    <property type="protein sequence ID" value="ABE73246.1"/>
    <property type="molecule type" value="mRNA"/>
</dbReference>
<dbReference type="EMBL" id="AY044243">
    <property type="protein sequence ID" value="AAK85150.1"/>
    <property type="molecule type" value="mRNA"/>
</dbReference>
<dbReference type="RefSeq" id="NP_523950.2">
    <property type="nucleotide sequence ID" value="NM_079226.3"/>
</dbReference>
<dbReference type="SMR" id="Q9VS05"/>
<dbReference type="BioGRID" id="64215">
    <property type="interactions" value="18"/>
</dbReference>
<dbReference type="FunCoup" id="Q9VS05">
    <property type="interactions" value="2"/>
</dbReference>
<dbReference type="IntAct" id="Q9VS05">
    <property type="interactions" value="8"/>
</dbReference>
<dbReference type="STRING" id="7227.FBpp0076609"/>
<dbReference type="PaxDb" id="7227-FBpp0076609"/>
<dbReference type="DNASU" id="38766"/>
<dbReference type="EnsemblMetazoa" id="FBtr0076900">
    <property type="protein sequence ID" value="FBpp0076609"/>
    <property type="gene ID" value="FBgn0045759"/>
</dbReference>
<dbReference type="GeneID" id="38766"/>
<dbReference type="KEGG" id="dme:Dmel_CG18647"/>
<dbReference type="UCSC" id="CG18647-RA">
    <property type="organism name" value="d. melanogaster"/>
</dbReference>
<dbReference type="AGR" id="FB:FBgn0045759"/>
<dbReference type="CTD" id="38766"/>
<dbReference type="FlyBase" id="FBgn0045759">
    <property type="gene designation" value="bin"/>
</dbReference>
<dbReference type="VEuPathDB" id="VectorBase:FBgn0045759"/>
<dbReference type="eggNOG" id="KOG2294">
    <property type="taxonomic scope" value="Eukaryota"/>
</dbReference>
<dbReference type="GeneTree" id="ENSGT00940000173807"/>
<dbReference type="HOGENOM" id="CLU_404541_0_0_1"/>
<dbReference type="InParanoid" id="Q9VS05"/>
<dbReference type="OMA" id="DNANFYA"/>
<dbReference type="OrthoDB" id="5954824at2759"/>
<dbReference type="PhylomeDB" id="Q9VS05"/>
<dbReference type="SignaLink" id="Q9VS05"/>
<dbReference type="BioGRID-ORCS" id="38766">
    <property type="hits" value="0 hits in 3 CRISPR screens"/>
</dbReference>
<dbReference type="GenomeRNAi" id="38766"/>
<dbReference type="PRO" id="PR:Q9VS05"/>
<dbReference type="Proteomes" id="UP000000803">
    <property type="component" value="Chromosome 3L"/>
</dbReference>
<dbReference type="Bgee" id="FBgn0045759">
    <property type="expression patterns" value="Expressed in muscle cell in digestive tract and 19 other cell types or tissues"/>
</dbReference>
<dbReference type="GO" id="GO:0005634">
    <property type="term" value="C:nucleus"/>
    <property type="evidence" value="ECO:0000314"/>
    <property type="project" value="FlyBase"/>
</dbReference>
<dbReference type="GO" id="GO:0000981">
    <property type="term" value="F:DNA-binding transcription factor activity, RNA polymerase II-specific"/>
    <property type="evidence" value="ECO:0000316"/>
    <property type="project" value="FlyBase"/>
</dbReference>
<dbReference type="GO" id="GO:0000978">
    <property type="term" value="F:RNA polymerase II cis-regulatory region sequence-specific DNA binding"/>
    <property type="evidence" value="ECO:0000318"/>
    <property type="project" value="GO_Central"/>
</dbReference>
<dbReference type="GO" id="GO:0043565">
    <property type="term" value="F:sequence-specific DNA binding"/>
    <property type="evidence" value="ECO:0000314"/>
    <property type="project" value="FlyBase"/>
</dbReference>
<dbReference type="GO" id="GO:0000976">
    <property type="term" value="F:transcription cis-regulatory region binding"/>
    <property type="evidence" value="ECO:0000314"/>
    <property type="project" value="FlyBase"/>
</dbReference>
<dbReference type="GO" id="GO:0009887">
    <property type="term" value="P:animal organ morphogenesis"/>
    <property type="evidence" value="ECO:0000318"/>
    <property type="project" value="GO_Central"/>
</dbReference>
<dbReference type="GO" id="GO:0001710">
    <property type="term" value="P:mesodermal cell fate commitment"/>
    <property type="evidence" value="ECO:0000315"/>
    <property type="project" value="FlyBase"/>
</dbReference>
<dbReference type="GO" id="GO:0045944">
    <property type="term" value="P:positive regulation of transcription by RNA polymerase II"/>
    <property type="evidence" value="ECO:0000315"/>
    <property type="project" value="FlyBase"/>
</dbReference>
<dbReference type="GO" id="GO:0006357">
    <property type="term" value="P:regulation of transcription by RNA polymerase II"/>
    <property type="evidence" value="ECO:0000315"/>
    <property type="project" value="FlyBase"/>
</dbReference>
<dbReference type="GO" id="GO:0007435">
    <property type="term" value="P:salivary gland morphogenesis"/>
    <property type="evidence" value="ECO:0000315"/>
    <property type="project" value="FlyBase"/>
</dbReference>
<dbReference type="FunFam" id="1.10.10.10:FF:000071">
    <property type="entry name" value="Forkhead box F1"/>
    <property type="match status" value="1"/>
</dbReference>
<dbReference type="Gene3D" id="1.10.10.10">
    <property type="entry name" value="Winged helix-like DNA-binding domain superfamily/Winged helix DNA-binding domain"/>
    <property type="match status" value="1"/>
</dbReference>
<dbReference type="InterPro" id="IPR001766">
    <property type="entry name" value="Fork_head_dom"/>
</dbReference>
<dbReference type="InterPro" id="IPR051770">
    <property type="entry name" value="Forkhead_box_regulator"/>
</dbReference>
<dbReference type="InterPro" id="IPR030456">
    <property type="entry name" value="TF_fork_head_CS_2"/>
</dbReference>
<dbReference type="InterPro" id="IPR036388">
    <property type="entry name" value="WH-like_DNA-bd_sf"/>
</dbReference>
<dbReference type="InterPro" id="IPR036390">
    <property type="entry name" value="WH_DNA-bd_sf"/>
</dbReference>
<dbReference type="PANTHER" id="PTHR46262">
    <property type="entry name" value="FORKHEAD BOX PROTEIN BINIOU"/>
    <property type="match status" value="1"/>
</dbReference>
<dbReference type="PANTHER" id="PTHR46262:SF2">
    <property type="entry name" value="FORKHEAD BOX PROTEIN BINIOU"/>
    <property type="match status" value="1"/>
</dbReference>
<dbReference type="Pfam" id="PF00250">
    <property type="entry name" value="Forkhead"/>
    <property type="match status" value="1"/>
</dbReference>
<dbReference type="PRINTS" id="PR00053">
    <property type="entry name" value="FORKHEAD"/>
</dbReference>
<dbReference type="SMART" id="SM00339">
    <property type="entry name" value="FH"/>
    <property type="match status" value="1"/>
</dbReference>
<dbReference type="SUPFAM" id="SSF46785">
    <property type="entry name" value="Winged helix' DNA-binding domain"/>
    <property type="match status" value="1"/>
</dbReference>
<dbReference type="PROSITE" id="PS00658">
    <property type="entry name" value="FORK_HEAD_2"/>
    <property type="match status" value="1"/>
</dbReference>
<dbReference type="PROSITE" id="PS50039">
    <property type="entry name" value="FORK_HEAD_3"/>
    <property type="match status" value="1"/>
</dbReference>
<keyword id="KW-0217">Developmental protein</keyword>
<keyword id="KW-0238">DNA-binding</keyword>
<keyword id="KW-0539">Nucleus</keyword>
<keyword id="KW-1185">Reference proteome</keyword>
<keyword id="KW-0804">Transcription</keyword>
<keyword id="KW-0805">Transcription regulation</keyword>
<sequence length="676" mass="71063">MIKSEEASDRSVMTMDQLGGYYHDPRAHPPFSHPHAHSHPHQHTHTGHPYRAGNLLTGGNYQAMGGGESPTELIDEKPNIGYMELKHYMDATPTATPVSAAQHYSLSALHSMGTPPASSSPIPPYGVLMTAHSAGSASPQSNSKTPTDLPQDLQYASSSTSTAKVQPLQVQLQPLNHQYASTIKYCSNNTILSANDYQLLTSQEQAGQQQPQQLPAQQLQHSPGGGYMSRISTSPSQVISNAHGMPVLNYSSSSSSPAKSLNGSESSPPSQNHLENKVSGSAVVGTGGSSQQDAPSTPDTTKKSGTRRPEKPALSYINMIGHAIKESPTGKLTLSEIYAYLQKSYEFFRGPYVGWKNSVRHNLSLNECFKKLPKGMGVGKPGKGNYWTIDENSAHLFEDEGSLRRRPRGYRSKIKVKPYAGHANGYYASGYGDAGMDNGNYYASPAFASYDYSAAGATGVSPAGGQGFADPWNAHAAHSGSSSVGVGMGVGPLPQYTNISCLAAGGNVNGSATTPPLAHSALGMAPSASSSSSPLGAAATLQSDYAPTASLVAAGYSYATSAGSLDNGLRSISLQQLPGLSSIQHAQAQAQAQAHHHHHQHHASHPSHSHQGHGSMHQNHGTSSTTPPPSQSGGSHGIDHSPIDRKPAYLPPISPPPMMVALNGGGGYYEGLKYAN</sequence>
<comment type="function">
    <text evidence="3 5 7 8 9 11 12 13 14">Component of a regulatory network controlling visceral mesoderm development and midgut morphogenesis. Transcriptional regulator involved in the activation of a large number of genes in the visceral mesoderm including betaTub60D, dpp and Hand. Binds to and regulates a number of enhancers driving expression in the visceral mesoderm in a temporally and spatially restricted manner. Also to binds to enhancers cooperatively with activators, such as bap or HLH54F, to coregulate expression of shared target genes in the visceral mesoderm. Binds to the Ndg enhancer and drives expression of Ndg in the late visceral musculature. May be involved in the transcriptional regulation of wupA in the visceral mesoderm. Plays an indirect role in the later stages of salivary gland positioning.</text>
</comment>
<comment type="subunit">
    <text evidence="4">Binds to DNA.</text>
</comment>
<comment type="subcellular location">
    <subcellularLocation>
        <location evidence="1 4 6">Nucleus</location>
    </subcellularLocation>
</comment>
<comment type="tissue specificity">
    <text evidence="3 6 10 13">In embryo, expressed in all types of visceral muscles and their progenitors (at protein level). In late stage 10 embryo, expressed in the caudal visceral mesoderm and trunk and hindgut visceral mesoderm progenitors.</text>
</comment>
<comment type="developmental stage">
    <text evidence="3 4">First detected at 10 dpc, when it is expressed in progenitors of all three types of visceral musculature including in primordia of the circular midgut muscles, in foregut and hindgut visceral mesoderm primordia and in the caudal visceral mesoderm. At 10 dpc to 11 dpc, it is detected in nuclei of cells of the presumptive visceral mesoderm. At 12 dpc, expression persists in trunk and hindgut visceral mesoderm. By 14 dpc, expressed in both circular and longitudinal precursors of midgut muscles, and by 16 dpc, expressed in foregut, midgut and hindgut visceral muscles (at protein level). First detected at the embryonic syncytial blastoderm stage.</text>
</comment>
<evidence type="ECO:0000255" key="1">
    <source>
        <dbReference type="PROSITE-ProRule" id="PRU00089"/>
    </source>
</evidence>
<evidence type="ECO:0000256" key="2">
    <source>
        <dbReference type="SAM" id="MobiDB-lite"/>
    </source>
</evidence>
<evidence type="ECO:0000269" key="3">
    <source>
    </source>
</evidence>
<evidence type="ECO:0000269" key="4">
    <source>
    </source>
</evidence>
<evidence type="ECO:0000269" key="5">
    <source>
    </source>
</evidence>
<evidence type="ECO:0000269" key="6">
    <source>
    </source>
</evidence>
<evidence type="ECO:0000269" key="7">
    <source>
    </source>
</evidence>
<evidence type="ECO:0000269" key="8">
    <source>
    </source>
</evidence>
<evidence type="ECO:0000269" key="9">
    <source>
    </source>
</evidence>
<evidence type="ECO:0000269" key="10">
    <source>
    </source>
</evidence>
<evidence type="ECO:0000269" key="11">
    <source>
    </source>
</evidence>
<evidence type="ECO:0000269" key="12">
    <source>
    </source>
</evidence>
<evidence type="ECO:0000269" key="13">
    <source>
    </source>
</evidence>
<evidence type="ECO:0000269" key="14">
    <source>
    </source>
</evidence>
<evidence type="ECO:0000303" key="15">
    <source>
    </source>
</evidence>
<evidence type="ECO:0000303" key="16">
    <source>
    </source>
</evidence>
<evidence type="ECO:0000305" key="17"/>
<evidence type="ECO:0000312" key="18">
    <source>
        <dbReference type="EMBL" id="AAK85150.1"/>
    </source>
</evidence>
<evidence type="ECO:0000312" key="19">
    <source>
        <dbReference type="EMBL" id="AAK97051.1"/>
    </source>
</evidence>
<evidence type="ECO:0000312" key="20">
    <source>
        <dbReference type="EMBL" id="ABE73246.1"/>
    </source>
</evidence>
<reference evidence="17 19" key="1">
    <citation type="journal article" date="2001" name="Genes Dev.">
        <title>biniou (FoxF), a central component in a regulatory network controlling visceral mesoderm development and midgut morphogenesis in Drosophila.</title>
        <authorList>
            <person name="Zaffran S."/>
            <person name="Kuchler A."/>
            <person name="Lee H.H."/>
            <person name="Frasch M."/>
        </authorList>
    </citation>
    <scope>NUCLEOTIDE SEQUENCE [MRNA]</scope>
    <scope>FUNCTION</scope>
    <scope>TISSUE SPECIFICITY</scope>
    <scope>DEVELOPMENTAL STAGE</scope>
    <source>
        <tissue evidence="3">Embryo</tissue>
    </source>
</reference>
<reference key="2">
    <citation type="journal article" date="2000" name="Science">
        <title>The genome sequence of Drosophila melanogaster.</title>
        <authorList>
            <person name="Adams M.D."/>
            <person name="Celniker S.E."/>
            <person name="Holt R.A."/>
            <person name="Evans C.A."/>
            <person name="Gocayne J.D."/>
            <person name="Amanatides P.G."/>
            <person name="Scherer S.E."/>
            <person name="Li P.W."/>
            <person name="Hoskins R.A."/>
            <person name="Galle R.F."/>
            <person name="George R.A."/>
            <person name="Lewis S.E."/>
            <person name="Richards S."/>
            <person name="Ashburner M."/>
            <person name="Henderson S.N."/>
            <person name="Sutton G.G."/>
            <person name="Wortman J.R."/>
            <person name="Yandell M.D."/>
            <person name="Zhang Q."/>
            <person name="Chen L.X."/>
            <person name="Brandon R.C."/>
            <person name="Rogers Y.-H.C."/>
            <person name="Blazej R.G."/>
            <person name="Champe M."/>
            <person name="Pfeiffer B.D."/>
            <person name="Wan K.H."/>
            <person name="Doyle C."/>
            <person name="Baxter E.G."/>
            <person name="Helt G."/>
            <person name="Nelson C.R."/>
            <person name="Miklos G.L.G."/>
            <person name="Abril J.F."/>
            <person name="Agbayani A."/>
            <person name="An H.-J."/>
            <person name="Andrews-Pfannkoch C."/>
            <person name="Baldwin D."/>
            <person name="Ballew R.M."/>
            <person name="Basu A."/>
            <person name="Baxendale J."/>
            <person name="Bayraktaroglu L."/>
            <person name="Beasley E.M."/>
            <person name="Beeson K.Y."/>
            <person name="Benos P.V."/>
            <person name="Berman B.P."/>
            <person name="Bhandari D."/>
            <person name="Bolshakov S."/>
            <person name="Borkova D."/>
            <person name="Botchan M.R."/>
            <person name="Bouck J."/>
            <person name="Brokstein P."/>
            <person name="Brottier P."/>
            <person name="Burtis K.C."/>
            <person name="Busam D.A."/>
            <person name="Butler H."/>
            <person name="Cadieu E."/>
            <person name="Center A."/>
            <person name="Chandra I."/>
            <person name="Cherry J.M."/>
            <person name="Cawley S."/>
            <person name="Dahlke C."/>
            <person name="Davenport L.B."/>
            <person name="Davies P."/>
            <person name="de Pablos B."/>
            <person name="Delcher A."/>
            <person name="Deng Z."/>
            <person name="Mays A.D."/>
            <person name="Dew I."/>
            <person name="Dietz S.M."/>
            <person name="Dodson K."/>
            <person name="Doup L.E."/>
            <person name="Downes M."/>
            <person name="Dugan-Rocha S."/>
            <person name="Dunkov B.C."/>
            <person name="Dunn P."/>
            <person name="Durbin K.J."/>
            <person name="Evangelista C.C."/>
            <person name="Ferraz C."/>
            <person name="Ferriera S."/>
            <person name="Fleischmann W."/>
            <person name="Fosler C."/>
            <person name="Gabrielian A.E."/>
            <person name="Garg N.S."/>
            <person name="Gelbart W.M."/>
            <person name="Glasser K."/>
            <person name="Glodek A."/>
            <person name="Gong F."/>
            <person name="Gorrell J.H."/>
            <person name="Gu Z."/>
            <person name="Guan P."/>
            <person name="Harris M."/>
            <person name="Harris N.L."/>
            <person name="Harvey D.A."/>
            <person name="Heiman T.J."/>
            <person name="Hernandez J.R."/>
            <person name="Houck J."/>
            <person name="Hostin D."/>
            <person name="Houston K.A."/>
            <person name="Howland T.J."/>
            <person name="Wei M.-H."/>
            <person name="Ibegwam C."/>
            <person name="Jalali M."/>
            <person name="Kalush F."/>
            <person name="Karpen G.H."/>
            <person name="Ke Z."/>
            <person name="Kennison J.A."/>
            <person name="Ketchum K.A."/>
            <person name="Kimmel B.E."/>
            <person name="Kodira C.D."/>
            <person name="Kraft C.L."/>
            <person name="Kravitz S."/>
            <person name="Kulp D."/>
            <person name="Lai Z."/>
            <person name="Lasko P."/>
            <person name="Lei Y."/>
            <person name="Levitsky A.A."/>
            <person name="Li J.H."/>
            <person name="Li Z."/>
            <person name="Liang Y."/>
            <person name="Lin X."/>
            <person name="Liu X."/>
            <person name="Mattei B."/>
            <person name="McIntosh T.C."/>
            <person name="McLeod M.P."/>
            <person name="McPherson D."/>
            <person name="Merkulov G."/>
            <person name="Milshina N.V."/>
            <person name="Mobarry C."/>
            <person name="Morris J."/>
            <person name="Moshrefi A."/>
            <person name="Mount S.M."/>
            <person name="Moy M."/>
            <person name="Murphy B."/>
            <person name="Murphy L."/>
            <person name="Muzny D.M."/>
            <person name="Nelson D.L."/>
            <person name="Nelson D.R."/>
            <person name="Nelson K.A."/>
            <person name="Nixon K."/>
            <person name="Nusskern D.R."/>
            <person name="Pacleb J.M."/>
            <person name="Palazzolo M."/>
            <person name="Pittman G.S."/>
            <person name="Pan S."/>
            <person name="Pollard J."/>
            <person name="Puri V."/>
            <person name="Reese M.G."/>
            <person name="Reinert K."/>
            <person name="Remington K."/>
            <person name="Saunders R.D.C."/>
            <person name="Scheeler F."/>
            <person name="Shen H."/>
            <person name="Shue B.C."/>
            <person name="Siden-Kiamos I."/>
            <person name="Simpson M."/>
            <person name="Skupski M.P."/>
            <person name="Smith T.J."/>
            <person name="Spier E."/>
            <person name="Spradling A.C."/>
            <person name="Stapleton M."/>
            <person name="Strong R."/>
            <person name="Sun E."/>
            <person name="Svirskas R."/>
            <person name="Tector C."/>
            <person name="Turner R."/>
            <person name="Venter E."/>
            <person name="Wang A.H."/>
            <person name="Wang X."/>
            <person name="Wang Z.-Y."/>
            <person name="Wassarman D.A."/>
            <person name="Weinstock G.M."/>
            <person name="Weissenbach J."/>
            <person name="Williams S.M."/>
            <person name="Woodage T."/>
            <person name="Worley K.C."/>
            <person name="Wu D."/>
            <person name="Yang S."/>
            <person name="Yao Q.A."/>
            <person name="Ye J."/>
            <person name="Yeh R.-F."/>
            <person name="Zaveri J.S."/>
            <person name="Zhan M."/>
            <person name="Zhang G."/>
            <person name="Zhao Q."/>
            <person name="Zheng L."/>
            <person name="Zheng X.H."/>
            <person name="Zhong F.N."/>
            <person name="Zhong W."/>
            <person name="Zhou X."/>
            <person name="Zhu S.C."/>
            <person name="Zhu X."/>
            <person name="Smith H.O."/>
            <person name="Gibbs R.A."/>
            <person name="Myers E.W."/>
            <person name="Rubin G.M."/>
            <person name="Venter J.C."/>
        </authorList>
    </citation>
    <scope>NUCLEOTIDE SEQUENCE [LARGE SCALE GENOMIC DNA]</scope>
    <source>
        <strain>Berkeley</strain>
    </source>
</reference>
<reference key="3">
    <citation type="journal article" date="2002" name="Genome Biol.">
        <title>Annotation of the Drosophila melanogaster euchromatic genome: a systematic review.</title>
        <authorList>
            <person name="Misra S."/>
            <person name="Crosby M.A."/>
            <person name="Mungall C.J."/>
            <person name="Matthews B.B."/>
            <person name="Campbell K.S."/>
            <person name="Hradecky P."/>
            <person name="Huang Y."/>
            <person name="Kaminker J.S."/>
            <person name="Millburn G.H."/>
            <person name="Prochnik S.E."/>
            <person name="Smith C.D."/>
            <person name="Tupy J.L."/>
            <person name="Whitfield E.J."/>
            <person name="Bayraktaroglu L."/>
            <person name="Berman B.P."/>
            <person name="Bettencourt B.R."/>
            <person name="Celniker S.E."/>
            <person name="de Grey A.D.N.J."/>
            <person name="Drysdale R.A."/>
            <person name="Harris N.L."/>
            <person name="Richter J."/>
            <person name="Russo S."/>
            <person name="Schroeder A.J."/>
            <person name="Shu S.Q."/>
            <person name="Stapleton M."/>
            <person name="Yamada C."/>
            <person name="Ashburner M."/>
            <person name="Gelbart W.M."/>
            <person name="Rubin G.M."/>
            <person name="Lewis S.E."/>
        </authorList>
    </citation>
    <scope>GENOME REANNOTATION</scope>
    <source>
        <strain>Berkeley</strain>
    </source>
</reference>
<reference evidence="20" key="4">
    <citation type="submission" date="2006-04" db="EMBL/GenBank/DDBJ databases">
        <authorList>
            <person name="Stapleton M."/>
            <person name="Carlson J."/>
            <person name="Chavez C."/>
            <person name="Frise E."/>
            <person name="George R."/>
            <person name="Pacleb J."/>
            <person name="Park S."/>
            <person name="Wan K."/>
            <person name="Yu C."/>
            <person name="Celniker S."/>
        </authorList>
    </citation>
    <scope>NUCLEOTIDE SEQUENCE [LARGE SCALE MRNA]</scope>
    <source>
        <strain>Berkeley</strain>
    </source>
</reference>
<reference evidence="17 18" key="5">
    <citation type="journal article" date="2002" name="Mech. Dev.">
        <title>DmFoxF, a novel Drosophila fork head factor expressed in visceral mesoderm.</title>
        <authorList>
            <person name="Perez Sanchez C."/>
            <person name="Casas-Tinto S."/>
            <person name="Sanchez L."/>
            <person name="Rey-Campos J."/>
            <person name="Granadino B."/>
        </authorList>
    </citation>
    <scope>NUCLEOTIDE SEQUENCE [MRNA] OF 13-676</scope>
    <scope>SUBUNIT</scope>
    <scope>SUBCELLULAR LOCATION</scope>
    <scope>DEVELOPMENTAL STAGE</scope>
</reference>
<reference evidence="17" key="6">
    <citation type="journal article" date="2002" name="Mech. Dev.">
        <title>The beta 3 tubulin gene is a direct target of bagpipe and biniou in the visceral mesoderm of Drosophila.</title>
        <authorList>
            <person name="Zaffran S."/>
            <person name="Frasch M."/>
        </authorList>
    </citation>
    <scope>FUNCTION</scope>
</reference>
<reference evidence="17" key="7">
    <citation type="journal article" date="2003" name="Nature">
        <title>Jelly belly protein activates the receptor tyrosine kinase Alk to specify visceral muscle pioneers.</title>
        <authorList>
            <person name="Lee H.H."/>
            <person name="Norris A."/>
            <person name="Weiss J.B."/>
            <person name="Frasch M."/>
        </authorList>
    </citation>
    <scope>SUBCELLULAR LOCATION</scope>
    <scope>TISSUE SPECIFICITY</scope>
</reference>
<reference evidence="17" key="8">
    <citation type="journal article" date="2004" name="Mol. Biol. Cell">
        <title>Transcription of Drosophila troponin I gene is regulated by two conserved, functionally identical, synergistic elements.</title>
        <authorList>
            <person name="Marin M.C."/>
            <person name="Rodriguez J.R."/>
            <person name="Ferrus A."/>
        </authorList>
    </citation>
    <scope>FUNCTION</scope>
</reference>
<reference evidence="17" key="9">
    <citation type="journal article" date="2005" name="Development">
        <title>Nuclear integration of positive Dpp signals, antagonistic Wg inputs and mesodermal competence factors during Drosophila visceral mesoderm induction.</title>
        <authorList>
            <person name="Lee H.H."/>
            <person name="Frasch M."/>
        </authorList>
    </citation>
    <scope>FUNCTION</scope>
</reference>
<reference evidence="17" key="10">
    <citation type="journal article" date="2005" name="Dev. Biol.">
        <title>Organ positioning in Drosophila requires complex tissue-tissue interactions.</title>
        <authorList>
            <person name="Vining M.S."/>
            <person name="Bradley P.L."/>
            <person name="Comeaux C.A."/>
            <person name="Andrew D.J."/>
        </authorList>
    </citation>
    <scope>FUNCTION</scope>
</reference>
<reference evidence="17" key="11">
    <citation type="journal article" date="2006" name="Development">
        <title>Cardioblast-intrinsic Tinman activity controls proper diversification and differentiation of myocardial cells in Drosophila.</title>
        <authorList>
            <person name="Zaffran S."/>
            <person name="Reim I."/>
            <person name="Qian L."/>
            <person name="Lo P.C."/>
            <person name="Bodmer R."/>
            <person name="Frasch M."/>
        </authorList>
    </citation>
    <scope>TISSUE SPECIFICITY</scope>
</reference>
<reference evidence="17" key="12">
    <citation type="journal article" date="2007" name="BMC Dev. Biol.">
        <title>Hand is a direct target of the forkhead transcription factor Biniou during Drosophila visceral mesoderm differentiation.</title>
        <authorList>
            <person name="Popichenko D."/>
            <person name="Sellin J."/>
            <person name="Bartkuhn M."/>
            <person name="Paululat A."/>
        </authorList>
    </citation>
    <scope>FUNCTION</scope>
</reference>
<reference evidence="17" key="13">
    <citation type="journal article" date="2007" name="Genes Dev.">
        <title>Temporal ChIP-on-chip reveals Biniou as a universal regulator of the visceral muscle transcriptional network.</title>
        <authorList>
            <person name="Jakobsen J.S."/>
            <person name="Braun M."/>
            <person name="Astorga J."/>
            <person name="Gustafson E.H."/>
            <person name="Sandmann T."/>
            <person name="Karzynski M."/>
            <person name="Carlsson P."/>
            <person name="Furlong E.E."/>
        </authorList>
    </citation>
    <scope>FUNCTION</scope>
</reference>
<reference evidence="17" key="14">
    <citation type="journal article" date="2010" name="Development">
        <title>HLH54F is required for the specification and migration of longitudinal gut muscle founders from the caudal mesoderm of Drosophila.</title>
        <authorList>
            <person name="Ismat A."/>
            <person name="Schaub C."/>
            <person name="Reim I."/>
            <person name="Kirchner K."/>
            <person name="Schultheis D."/>
            <person name="Frasch M."/>
        </authorList>
    </citation>
    <scope>FUNCTION</scope>
    <scope>TISSUE SPECIFICITY</scope>
</reference>
<reference evidence="17" key="15">
    <citation type="journal article" date="2012" name="Development">
        <title>Differential regulation of mesodermal gene expression by Drosophila cell type-specific Forkhead transcription factors.</title>
        <authorList>
            <person name="Zhu X."/>
            <person name="Ahmad S.M."/>
            <person name="Aboukhalil A."/>
            <person name="Busser B.W."/>
            <person name="Kim Y."/>
            <person name="Tansey T.R."/>
            <person name="Haimovich A."/>
            <person name="Jeffries N."/>
            <person name="Bulyk M.L."/>
            <person name="Michelson A.M."/>
        </authorList>
    </citation>
    <scope>FUNCTION</scope>
</reference>
<gene>
    <name type="primary">bin</name>
    <name evidence="15" type="synonym">FoxF</name>
    <name type="ORF">CG18647</name>
</gene>
<proteinExistence type="evidence at protein level"/>
<protein>
    <recommendedName>
        <fullName>Forkhead box protein biniou</fullName>
    </recommendedName>
    <alternativeName>
        <fullName>Forkhead box protein FoxF</fullName>
        <shortName evidence="16">DmFoxF</shortName>
    </alternativeName>
</protein>
<feature type="chain" id="PRO_0000420793" description="Forkhead box protein biniou">
    <location>
        <begin position="1"/>
        <end position="676"/>
    </location>
</feature>
<feature type="DNA-binding region" description="Fork-head" evidence="1">
    <location>
        <begin position="311"/>
        <end position="408"/>
    </location>
</feature>
<feature type="region of interest" description="Disordered" evidence="2">
    <location>
        <begin position="22"/>
        <end position="50"/>
    </location>
</feature>
<feature type="region of interest" description="Disordered" evidence="2">
    <location>
        <begin position="131"/>
        <end position="160"/>
    </location>
</feature>
<feature type="region of interest" description="Disordered" evidence="2">
    <location>
        <begin position="203"/>
        <end position="232"/>
    </location>
</feature>
<feature type="region of interest" description="Disordered" evidence="2">
    <location>
        <begin position="249"/>
        <end position="312"/>
    </location>
</feature>
<feature type="region of interest" description="Disordered" evidence="2">
    <location>
        <begin position="583"/>
        <end position="651"/>
    </location>
</feature>
<feature type="compositionally biased region" description="Basic residues" evidence="2">
    <location>
        <begin position="34"/>
        <end position="48"/>
    </location>
</feature>
<feature type="compositionally biased region" description="Polar residues" evidence="2">
    <location>
        <begin position="133"/>
        <end position="160"/>
    </location>
</feature>
<feature type="compositionally biased region" description="Low complexity" evidence="2">
    <location>
        <begin position="203"/>
        <end position="220"/>
    </location>
</feature>
<feature type="compositionally biased region" description="Polar residues" evidence="2">
    <location>
        <begin position="257"/>
        <end position="273"/>
    </location>
</feature>
<feature type="compositionally biased region" description="Low complexity" evidence="2">
    <location>
        <begin position="583"/>
        <end position="593"/>
    </location>
</feature>
<feature type="compositionally biased region" description="Basic residues" evidence="2">
    <location>
        <begin position="594"/>
        <end position="611"/>
    </location>
</feature>
<feature type="compositionally biased region" description="Low complexity" evidence="2">
    <location>
        <begin position="612"/>
        <end position="625"/>
    </location>
</feature>
<feature type="compositionally biased region" description="Basic and acidic residues" evidence="2">
    <location>
        <begin position="637"/>
        <end position="647"/>
    </location>
</feature>
<feature type="sequence conflict" description="In Ref. 1; AAK97051." evidence="17" ref="1">
    <original>A</original>
    <variation>V</variation>
    <location>
        <position position="7"/>
    </location>
</feature>
<feature type="sequence conflict" description="In Ref. 1; AAK97051." evidence="17" ref="1">
    <original>S</original>
    <variation>T</variation>
    <location>
        <position position="38"/>
    </location>
</feature>
<feature type="sequence conflict" description="In Ref. 1; AAK97051." evidence="17" ref="1">
    <original>A</original>
    <variation>V</variation>
    <location>
        <position position="156"/>
    </location>
</feature>
<feature type="sequence conflict" description="In Ref. 1; AAK97051." evidence="17" ref="1">
    <original>P</original>
    <variation>S</variation>
    <location>
        <position position="211"/>
    </location>
</feature>
<feature type="sequence conflict" description="In Ref. 1; AAK97051." evidence="17" ref="1">
    <original>E</original>
    <variation>D</variation>
    <location>
        <position position="275"/>
    </location>
</feature>
<feature type="sequence conflict" description="In Ref. 1; AAK97051." evidence="17" ref="1">
    <original>V</original>
    <variation>L</variation>
    <location>
        <position position="508"/>
    </location>
</feature>
<feature type="sequence conflict" description="In Ref. 1; AAK97051." evidence="17" ref="1">
    <original>G</original>
    <variation>E</variation>
    <location>
        <position position="536"/>
    </location>
</feature>
<feature type="sequence conflict" description="In Ref. 1; AAK97051." evidence="17" ref="1">
    <original>P</original>
    <variation>T</variation>
    <location>
        <position position="606"/>
    </location>
</feature>
<feature type="sequence conflict" description="In Ref. 1; AAK97051." evidence="17" ref="1">
    <original>A</original>
    <variation>V</variation>
    <location>
        <position position="648"/>
    </location>
</feature>
<accession>Q9VS05</accession>
<accession>Q8T9N0</accession>
<accession>Q95WV0</accession>